<evidence type="ECO:0000255" key="1">
    <source>
        <dbReference type="HAMAP-Rule" id="MF_00033"/>
    </source>
</evidence>
<accession>B0BAL6</accession>
<protein>
    <recommendedName>
        <fullName evidence="1">UDP-N-acetylglucosamine--N-acetylmuramyl-(pentapeptide) pyrophosphoryl-undecaprenol N-acetylglucosamine transferase</fullName>
        <ecNumber evidence="1">2.4.1.227</ecNumber>
    </recommendedName>
    <alternativeName>
        <fullName evidence="1">Undecaprenyl-PP-MurNAc-pentapeptide-UDPGlcNAc GlcNAc transferase</fullName>
    </alternativeName>
</protein>
<keyword id="KW-0131">Cell cycle</keyword>
<keyword id="KW-0132">Cell division</keyword>
<keyword id="KW-0997">Cell inner membrane</keyword>
<keyword id="KW-1003">Cell membrane</keyword>
<keyword id="KW-0133">Cell shape</keyword>
<keyword id="KW-0961">Cell wall biogenesis/degradation</keyword>
<keyword id="KW-0328">Glycosyltransferase</keyword>
<keyword id="KW-0472">Membrane</keyword>
<keyword id="KW-0573">Peptidoglycan synthesis</keyword>
<keyword id="KW-0808">Transferase</keyword>
<feature type="chain" id="PRO_1000090419" description="UDP-N-acetylglucosamine--N-acetylmuramyl-(pentapeptide) pyrophosphoryl-undecaprenol N-acetylglucosamine transferase">
    <location>
        <begin position="1"/>
        <end position="352"/>
    </location>
</feature>
<feature type="binding site" evidence="1">
    <location>
        <begin position="14"/>
        <end position="16"/>
    </location>
    <ligand>
        <name>UDP-N-acetyl-alpha-D-glucosamine</name>
        <dbReference type="ChEBI" id="CHEBI:57705"/>
    </ligand>
</feature>
<feature type="binding site" evidence="1">
    <location>
        <position position="124"/>
    </location>
    <ligand>
        <name>UDP-N-acetyl-alpha-D-glucosamine</name>
        <dbReference type="ChEBI" id="CHEBI:57705"/>
    </ligand>
</feature>
<feature type="binding site" evidence="1">
    <location>
        <position position="164"/>
    </location>
    <ligand>
        <name>UDP-N-acetyl-alpha-D-glucosamine</name>
        <dbReference type="ChEBI" id="CHEBI:57705"/>
    </ligand>
</feature>
<feature type="binding site" evidence="1">
    <location>
        <position position="185"/>
    </location>
    <ligand>
        <name>UDP-N-acetyl-alpha-D-glucosamine</name>
        <dbReference type="ChEBI" id="CHEBI:57705"/>
    </ligand>
</feature>
<feature type="binding site" evidence="1">
    <location>
        <position position="285"/>
    </location>
    <ligand>
        <name>UDP-N-acetyl-alpha-D-glucosamine</name>
        <dbReference type="ChEBI" id="CHEBI:57705"/>
    </ligand>
</feature>
<dbReference type="EC" id="2.4.1.227" evidence="1"/>
<dbReference type="EMBL" id="AM884177">
    <property type="protein sequence ID" value="CAP06528.1"/>
    <property type="molecule type" value="Genomic_DNA"/>
</dbReference>
<dbReference type="RefSeq" id="WP_009872909.1">
    <property type="nucleotide sequence ID" value="NC_010280.2"/>
</dbReference>
<dbReference type="SMR" id="B0BAL6"/>
<dbReference type="CAZy" id="GT28">
    <property type="family name" value="Glycosyltransferase Family 28"/>
</dbReference>
<dbReference type="KEGG" id="ctl:CTLon_0130"/>
<dbReference type="HOGENOM" id="CLU_037404_2_1_0"/>
<dbReference type="UniPathway" id="UPA00219"/>
<dbReference type="Proteomes" id="UP001154401">
    <property type="component" value="Chromosome"/>
</dbReference>
<dbReference type="GO" id="GO:0005886">
    <property type="term" value="C:plasma membrane"/>
    <property type="evidence" value="ECO:0007669"/>
    <property type="project" value="UniProtKB-SubCell"/>
</dbReference>
<dbReference type="GO" id="GO:0051991">
    <property type="term" value="F:UDP-N-acetyl-D-glucosamine:N-acetylmuramoyl-L-alanyl-D-glutamyl-meso-2,6-diaminopimelyl-D-alanyl-D-alanine-diphosphoundecaprenol 4-beta-N-acetylglucosaminlytransferase activity"/>
    <property type="evidence" value="ECO:0007669"/>
    <property type="project" value="RHEA"/>
</dbReference>
<dbReference type="GO" id="GO:0050511">
    <property type="term" value="F:undecaprenyldiphospho-muramoylpentapeptide beta-N-acetylglucosaminyltransferase activity"/>
    <property type="evidence" value="ECO:0007669"/>
    <property type="project" value="UniProtKB-UniRule"/>
</dbReference>
<dbReference type="GO" id="GO:0005975">
    <property type="term" value="P:carbohydrate metabolic process"/>
    <property type="evidence" value="ECO:0007669"/>
    <property type="project" value="InterPro"/>
</dbReference>
<dbReference type="GO" id="GO:0051301">
    <property type="term" value="P:cell division"/>
    <property type="evidence" value="ECO:0007669"/>
    <property type="project" value="UniProtKB-KW"/>
</dbReference>
<dbReference type="GO" id="GO:0071555">
    <property type="term" value="P:cell wall organization"/>
    <property type="evidence" value="ECO:0007669"/>
    <property type="project" value="UniProtKB-KW"/>
</dbReference>
<dbReference type="GO" id="GO:0030259">
    <property type="term" value="P:lipid glycosylation"/>
    <property type="evidence" value="ECO:0007669"/>
    <property type="project" value="UniProtKB-UniRule"/>
</dbReference>
<dbReference type="GO" id="GO:0009252">
    <property type="term" value="P:peptidoglycan biosynthetic process"/>
    <property type="evidence" value="ECO:0007669"/>
    <property type="project" value="UniProtKB-UniRule"/>
</dbReference>
<dbReference type="GO" id="GO:0008360">
    <property type="term" value="P:regulation of cell shape"/>
    <property type="evidence" value="ECO:0007669"/>
    <property type="project" value="UniProtKB-KW"/>
</dbReference>
<dbReference type="CDD" id="cd03785">
    <property type="entry name" value="GT28_MurG"/>
    <property type="match status" value="1"/>
</dbReference>
<dbReference type="Gene3D" id="3.40.50.2000">
    <property type="entry name" value="Glycogen Phosphorylase B"/>
    <property type="match status" value="2"/>
</dbReference>
<dbReference type="HAMAP" id="MF_00033">
    <property type="entry name" value="MurG"/>
    <property type="match status" value="1"/>
</dbReference>
<dbReference type="InterPro" id="IPR006009">
    <property type="entry name" value="GlcNAc_MurG"/>
</dbReference>
<dbReference type="InterPro" id="IPR007235">
    <property type="entry name" value="Glyco_trans_28_C"/>
</dbReference>
<dbReference type="InterPro" id="IPR004276">
    <property type="entry name" value="GlycoTrans_28_N"/>
</dbReference>
<dbReference type="NCBIfam" id="TIGR01133">
    <property type="entry name" value="murG"/>
    <property type="match status" value="1"/>
</dbReference>
<dbReference type="PANTHER" id="PTHR21015:SF22">
    <property type="entry name" value="GLYCOSYLTRANSFERASE"/>
    <property type="match status" value="1"/>
</dbReference>
<dbReference type="PANTHER" id="PTHR21015">
    <property type="entry name" value="UDP-N-ACETYLGLUCOSAMINE--N-ACETYLMURAMYL-(PENTAPEPTIDE) PYROPHOSPHORYL-UNDECAPRENOL N-ACETYLGLUCOSAMINE TRANSFERASE 1"/>
    <property type="match status" value="1"/>
</dbReference>
<dbReference type="Pfam" id="PF04101">
    <property type="entry name" value="Glyco_tran_28_C"/>
    <property type="match status" value="1"/>
</dbReference>
<dbReference type="Pfam" id="PF03033">
    <property type="entry name" value="Glyco_transf_28"/>
    <property type="match status" value="1"/>
</dbReference>
<dbReference type="SUPFAM" id="SSF53756">
    <property type="entry name" value="UDP-Glycosyltransferase/glycogen phosphorylase"/>
    <property type="match status" value="1"/>
</dbReference>
<reference key="1">
    <citation type="journal article" date="2008" name="Genome Res.">
        <title>Chlamydia trachomatis: genome sequence analysis of lymphogranuloma venereum isolates.</title>
        <authorList>
            <person name="Thomson N.R."/>
            <person name="Holden M.T.G."/>
            <person name="Carder C."/>
            <person name="Lennard N."/>
            <person name="Lockey S.J."/>
            <person name="Marsh P."/>
            <person name="Skipp P."/>
            <person name="O'Connor C.D."/>
            <person name="Goodhead I."/>
            <person name="Norbertzcak H."/>
            <person name="Harris B."/>
            <person name="Ormond D."/>
            <person name="Rance R."/>
            <person name="Quail M.A."/>
            <person name="Parkhill J."/>
            <person name="Stephens R.S."/>
            <person name="Clarke I.N."/>
        </authorList>
    </citation>
    <scope>NUCLEOTIDE SEQUENCE [LARGE SCALE GENOMIC DNA]</scope>
    <source>
        <strain>UCH-1/proctitis</strain>
    </source>
</reference>
<organism>
    <name type="scientific">Chlamydia trachomatis serovar L2b (strain UCH-1/proctitis)</name>
    <dbReference type="NCBI Taxonomy" id="471473"/>
    <lineage>
        <taxon>Bacteria</taxon>
        <taxon>Pseudomonadati</taxon>
        <taxon>Chlamydiota</taxon>
        <taxon>Chlamydiia</taxon>
        <taxon>Chlamydiales</taxon>
        <taxon>Chlamydiaceae</taxon>
        <taxon>Chlamydia/Chlamydophila group</taxon>
        <taxon>Chlamydia</taxon>
    </lineage>
</organism>
<proteinExistence type="inferred from homology"/>
<sequence length="352" mass="38404">MKKINKIVLAVGGTGGHIIPALAARETFIHEDIEVLLLGKGLAHFLGDDSEIAYCDIPSGSPFSLRVNRMFSGAKQLYKGYVAALQKIRDFTPDLAIGFGSYHSLPAMLASIRSRIPLFLHEQNIVPGKVNKLFSRFAKGVGMSFAAAGEHFHCRAEEVFLPIRKLSEQIVFPGASPVICVVGGSQGAKILNDVVPKALARIRESYSNLYVHHIVGPKGDLQAVSQVYQDAGINHTVTAFDHNMLGVLQASDLVISRSGATMLNELLWVQVPAILIPYPGAYGHQEVNAKFFTHTVGGGTMILQKYLTEESLSKQVLLALDPATSENRRKAMLSAQQKKSFKSLYQFICESL</sequence>
<gene>
    <name evidence="1" type="primary">murG</name>
    <name type="ordered locus">CTLon_0130</name>
</gene>
<name>MURG_CHLTB</name>
<comment type="function">
    <text evidence="1">Cell wall formation. Catalyzes the transfer of a GlcNAc subunit on undecaprenyl-pyrophosphoryl-MurNAc-pentapeptide (lipid intermediate I) to form undecaprenyl-pyrophosphoryl-MurNAc-(pentapeptide)GlcNAc (lipid intermediate II).</text>
</comment>
<comment type="catalytic activity">
    <reaction evidence="1">
        <text>di-trans,octa-cis-undecaprenyl diphospho-N-acetyl-alpha-D-muramoyl-L-alanyl-D-glutamyl-meso-2,6-diaminopimeloyl-D-alanyl-D-alanine + UDP-N-acetyl-alpha-D-glucosamine = di-trans,octa-cis-undecaprenyl diphospho-[N-acetyl-alpha-D-glucosaminyl-(1-&gt;4)]-N-acetyl-alpha-D-muramoyl-L-alanyl-D-glutamyl-meso-2,6-diaminopimeloyl-D-alanyl-D-alanine + UDP + H(+)</text>
        <dbReference type="Rhea" id="RHEA:31227"/>
        <dbReference type="ChEBI" id="CHEBI:15378"/>
        <dbReference type="ChEBI" id="CHEBI:57705"/>
        <dbReference type="ChEBI" id="CHEBI:58223"/>
        <dbReference type="ChEBI" id="CHEBI:61387"/>
        <dbReference type="ChEBI" id="CHEBI:61388"/>
        <dbReference type="EC" id="2.4.1.227"/>
    </reaction>
</comment>
<comment type="pathway">
    <text evidence="1">Cell wall biogenesis; peptidoglycan biosynthesis.</text>
</comment>
<comment type="subcellular location">
    <subcellularLocation>
        <location evidence="1">Cell inner membrane</location>
        <topology evidence="1">Peripheral membrane protein</topology>
        <orientation evidence="1">Cytoplasmic side</orientation>
    </subcellularLocation>
</comment>
<comment type="similarity">
    <text evidence="1">Belongs to the glycosyltransferase 28 family. MurG subfamily.</text>
</comment>